<keyword id="KW-0378">Hydrolase</keyword>
<keyword id="KW-1185">Reference proteome</keyword>
<accession>Q8Y6V4</accession>
<organism>
    <name type="scientific">Listeria monocytogenes serovar 1/2a (strain ATCC BAA-679 / EGD-e)</name>
    <dbReference type="NCBI Taxonomy" id="169963"/>
    <lineage>
        <taxon>Bacteria</taxon>
        <taxon>Bacillati</taxon>
        <taxon>Bacillota</taxon>
        <taxon>Bacilli</taxon>
        <taxon>Bacillales</taxon>
        <taxon>Listeriaceae</taxon>
        <taxon>Listeria</taxon>
    </lineage>
</organism>
<reference key="1">
    <citation type="journal article" date="2001" name="Science">
        <title>Comparative genomics of Listeria species.</title>
        <authorList>
            <person name="Glaser P."/>
            <person name="Frangeul L."/>
            <person name="Buchrieser C."/>
            <person name="Rusniok C."/>
            <person name="Amend A."/>
            <person name="Baquero F."/>
            <person name="Berche P."/>
            <person name="Bloecker H."/>
            <person name="Brandt P."/>
            <person name="Chakraborty T."/>
            <person name="Charbit A."/>
            <person name="Chetouani F."/>
            <person name="Couve E."/>
            <person name="de Daruvar A."/>
            <person name="Dehoux P."/>
            <person name="Domann E."/>
            <person name="Dominguez-Bernal G."/>
            <person name="Duchaud E."/>
            <person name="Durant L."/>
            <person name="Dussurget O."/>
            <person name="Entian K.-D."/>
            <person name="Fsihi H."/>
            <person name="Garcia-del Portillo F."/>
            <person name="Garrido P."/>
            <person name="Gautier L."/>
            <person name="Goebel W."/>
            <person name="Gomez-Lopez N."/>
            <person name="Hain T."/>
            <person name="Hauf J."/>
            <person name="Jackson D."/>
            <person name="Jones L.-M."/>
            <person name="Kaerst U."/>
            <person name="Kreft J."/>
            <person name="Kuhn M."/>
            <person name="Kunst F."/>
            <person name="Kurapkat G."/>
            <person name="Madueno E."/>
            <person name="Maitournam A."/>
            <person name="Mata Vicente J."/>
            <person name="Ng E."/>
            <person name="Nedjari H."/>
            <person name="Nordsiek G."/>
            <person name="Novella S."/>
            <person name="de Pablos B."/>
            <person name="Perez-Diaz J.-C."/>
            <person name="Purcell R."/>
            <person name="Remmel B."/>
            <person name="Rose M."/>
            <person name="Schlueter T."/>
            <person name="Simoes N."/>
            <person name="Tierrez A."/>
            <person name="Vazquez-Boland J.-A."/>
            <person name="Voss H."/>
            <person name="Wehland J."/>
            <person name="Cossart P."/>
        </authorList>
    </citation>
    <scope>NUCLEOTIDE SEQUENCE [LARGE SCALE GENOMIC DNA]</scope>
    <source>
        <strain>ATCC BAA-679 / EGD-e</strain>
    </source>
</reference>
<dbReference type="EMBL" id="AL591979">
    <property type="protein sequence ID" value="CAC99655.1"/>
    <property type="molecule type" value="Genomic_DNA"/>
</dbReference>
<dbReference type="PIR" id="AI1271">
    <property type="entry name" value="AI1271"/>
</dbReference>
<dbReference type="RefSeq" id="NP_465102.1">
    <property type="nucleotide sequence ID" value="NC_003210.1"/>
</dbReference>
<dbReference type="RefSeq" id="WP_010989749.1">
    <property type="nucleotide sequence ID" value="NC_003210.1"/>
</dbReference>
<dbReference type="SMR" id="Q8Y6V4"/>
<dbReference type="STRING" id="169963.gene:17594234"/>
<dbReference type="PaxDb" id="169963-lmo1577"/>
<dbReference type="EnsemblBacteria" id="CAC99655">
    <property type="protein sequence ID" value="CAC99655"/>
    <property type="gene ID" value="CAC99655"/>
</dbReference>
<dbReference type="GeneID" id="986999"/>
<dbReference type="KEGG" id="lmo:lmo1577"/>
<dbReference type="PATRIC" id="fig|169963.11.peg.1618"/>
<dbReference type="eggNOG" id="COG2220">
    <property type="taxonomic scope" value="Bacteria"/>
</dbReference>
<dbReference type="HOGENOM" id="CLU_070010_4_1_9"/>
<dbReference type="OrthoDB" id="9789133at2"/>
<dbReference type="PhylomeDB" id="Q8Y6V4"/>
<dbReference type="BioCyc" id="LMON169963:LMO1577-MONOMER"/>
<dbReference type="Proteomes" id="UP000000817">
    <property type="component" value="Chromosome"/>
</dbReference>
<dbReference type="GO" id="GO:0016787">
    <property type="term" value="F:hydrolase activity"/>
    <property type="evidence" value="ECO:0000318"/>
    <property type="project" value="GO_Central"/>
</dbReference>
<dbReference type="Gene3D" id="3.60.15.10">
    <property type="entry name" value="Ribonuclease Z/Hydroxyacylglutathione hydrolase-like"/>
    <property type="match status" value="1"/>
</dbReference>
<dbReference type="HAMAP" id="MF_00457">
    <property type="entry name" value="UPF0173"/>
    <property type="match status" value="1"/>
</dbReference>
<dbReference type="InterPro" id="IPR001279">
    <property type="entry name" value="Metallo-B-lactamas"/>
</dbReference>
<dbReference type="InterPro" id="IPR036866">
    <property type="entry name" value="RibonucZ/Hydroxyglut_hydro"/>
</dbReference>
<dbReference type="InterPro" id="IPR022877">
    <property type="entry name" value="UPF0173"/>
</dbReference>
<dbReference type="InterPro" id="IPR050114">
    <property type="entry name" value="UPF0173_UPF0282_UlaG_hydrolase"/>
</dbReference>
<dbReference type="NCBIfam" id="NF001911">
    <property type="entry name" value="PRK00685.1"/>
    <property type="match status" value="1"/>
</dbReference>
<dbReference type="PANTHER" id="PTHR43546:SF3">
    <property type="entry name" value="UPF0173 METAL-DEPENDENT HYDROLASE MJ1163"/>
    <property type="match status" value="1"/>
</dbReference>
<dbReference type="PANTHER" id="PTHR43546">
    <property type="entry name" value="UPF0173 METAL-DEPENDENT HYDROLASE MJ1163-RELATED"/>
    <property type="match status" value="1"/>
</dbReference>
<dbReference type="Pfam" id="PF12706">
    <property type="entry name" value="Lactamase_B_2"/>
    <property type="match status" value="1"/>
</dbReference>
<dbReference type="SMART" id="SM00849">
    <property type="entry name" value="Lactamase_B"/>
    <property type="match status" value="1"/>
</dbReference>
<dbReference type="SUPFAM" id="SSF56281">
    <property type="entry name" value="Metallo-hydrolase/oxidoreductase"/>
    <property type="match status" value="1"/>
</dbReference>
<gene>
    <name type="ordered locus">lmo1577</name>
</gene>
<name>Y1577_LISMO</name>
<sequence length="228" mass="24648">MKISFHGQSCIKIITGDTTILVDPFISGNEKCDLKAEEQMPDFIVLSHGHDDHVGDTVEIAKNSGATVICNADLASFLAVEDGLENMAPMHIGGKRQFSFGQVKLTQAFHGSQTVRDGRIVNLGFPTGIVFTIEDKNIYFAGDTGLFSDMKLIGELNPLDVAFLPIGDNFTMGPEDAAIAARFLQAKLVVPMHYNTFPLIAQDPHKFVASLNEGIAGKVLEIGEGIEI</sequence>
<evidence type="ECO:0000255" key="1">
    <source>
        <dbReference type="HAMAP-Rule" id="MF_00457"/>
    </source>
</evidence>
<proteinExistence type="inferred from homology"/>
<protein>
    <recommendedName>
        <fullName evidence="1">UPF0173 metal-dependent hydrolase lmo1577</fullName>
    </recommendedName>
</protein>
<feature type="chain" id="PRO_0000156376" description="UPF0173 metal-dependent hydrolase lmo1577">
    <location>
        <begin position="1"/>
        <end position="228"/>
    </location>
</feature>
<comment type="similarity">
    <text evidence="1">Belongs to the UPF0173 family.</text>
</comment>